<organism>
    <name type="scientific">Phocaeicola vulgatus (strain ATCC 8482 / DSM 1447 / JCM 5826 / CCUG 4940 / NBRC 14291 / NCTC 11154)</name>
    <name type="common">Bacteroides vulgatus</name>
    <dbReference type="NCBI Taxonomy" id="435590"/>
    <lineage>
        <taxon>Bacteria</taxon>
        <taxon>Pseudomonadati</taxon>
        <taxon>Bacteroidota</taxon>
        <taxon>Bacteroidia</taxon>
        <taxon>Bacteroidales</taxon>
        <taxon>Bacteroidaceae</taxon>
        <taxon>Phocaeicola</taxon>
    </lineage>
</organism>
<comment type="function">
    <text evidence="1">Catalyzes the reversible interconversion of serine and glycine with tetrahydrofolate (THF) serving as the one-carbon carrier. This reaction serves as the major source of one-carbon groups required for the biosynthesis of purines, thymidylate, methionine, and other important biomolecules. Also exhibits THF-independent aldolase activity toward beta-hydroxyamino acids, producing glycine and aldehydes, via a retro-aldol mechanism.</text>
</comment>
<comment type="catalytic activity">
    <reaction evidence="1">
        <text>(6R)-5,10-methylene-5,6,7,8-tetrahydrofolate + glycine + H2O = (6S)-5,6,7,8-tetrahydrofolate + L-serine</text>
        <dbReference type="Rhea" id="RHEA:15481"/>
        <dbReference type="ChEBI" id="CHEBI:15377"/>
        <dbReference type="ChEBI" id="CHEBI:15636"/>
        <dbReference type="ChEBI" id="CHEBI:33384"/>
        <dbReference type="ChEBI" id="CHEBI:57305"/>
        <dbReference type="ChEBI" id="CHEBI:57453"/>
        <dbReference type="EC" id="2.1.2.1"/>
    </reaction>
</comment>
<comment type="cofactor">
    <cofactor evidence="1">
        <name>pyridoxal 5'-phosphate</name>
        <dbReference type="ChEBI" id="CHEBI:597326"/>
    </cofactor>
</comment>
<comment type="pathway">
    <text evidence="1">One-carbon metabolism; tetrahydrofolate interconversion.</text>
</comment>
<comment type="pathway">
    <text evidence="1">Amino-acid biosynthesis; glycine biosynthesis; glycine from L-serine: step 1/1.</text>
</comment>
<comment type="subunit">
    <text evidence="1">Homodimer.</text>
</comment>
<comment type="subcellular location">
    <subcellularLocation>
        <location evidence="1">Cytoplasm</location>
    </subcellularLocation>
</comment>
<comment type="similarity">
    <text evidence="1">Belongs to the SHMT family.</text>
</comment>
<dbReference type="EC" id="2.1.2.1" evidence="1"/>
<dbReference type="EMBL" id="CP000139">
    <property type="protein sequence ID" value="ABR40967.1"/>
    <property type="molecule type" value="Genomic_DNA"/>
</dbReference>
<dbReference type="RefSeq" id="WP_005841993.1">
    <property type="nucleotide sequence ID" value="NZ_JANSWM010000114.1"/>
</dbReference>
<dbReference type="SMR" id="A6L5K3"/>
<dbReference type="STRING" id="435590.BVU_3341"/>
<dbReference type="PaxDb" id="435590-BVU_3341"/>
<dbReference type="GeneID" id="5304302"/>
<dbReference type="KEGG" id="bvu:BVU_3341"/>
<dbReference type="eggNOG" id="COG0112">
    <property type="taxonomic scope" value="Bacteria"/>
</dbReference>
<dbReference type="HOGENOM" id="CLU_022477_2_1_10"/>
<dbReference type="BioCyc" id="BVUL435590:G1G59-3463-MONOMER"/>
<dbReference type="UniPathway" id="UPA00193"/>
<dbReference type="UniPathway" id="UPA00288">
    <property type="reaction ID" value="UER01023"/>
</dbReference>
<dbReference type="Proteomes" id="UP000002861">
    <property type="component" value="Chromosome"/>
</dbReference>
<dbReference type="GO" id="GO:0005829">
    <property type="term" value="C:cytosol"/>
    <property type="evidence" value="ECO:0007669"/>
    <property type="project" value="TreeGrafter"/>
</dbReference>
<dbReference type="GO" id="GO:0004372">
    <property type="term" value="F:glycine hydroxymethyltransferase activity"/>
    <property type="evidence" value="ECO:0007669"/>
    <property type="project" value="UniProtKB-UniRule"/>
</dbReference>
<dbReference type="GO" id="GO:0030170">
    <property type="term" value="F:pyridoxal phosphate binding"/>
    <property type="evidence" value="ECO:0007669"/>
    <property type="project" value="UniProtKB-UniRule"/>
</dbReference>
<dbReference type="GO" id="GO:0019264">
    <property type="term" value="P:glycine biosynthetic process from serine"/>
    <property type="evidence" value="ECO:0007669"/>
    <property type="project" value="UniProtKB-UniRule"/>
</dbReference>
<dbReference type="GO" id="GO:0035999">
    <property type="term" value="P:tetrahydrofolate interconversion"/>
    <property type="evidence" value="ECO:0007669"/>
    <property type="project" value="UniProtKB-UniRule"/>
</dbReference>
<dbReference type="CDD" id="cd00378">
    <property type="entry name" value="SHMT"/>
    <property type="match status" value="1"/>
</dbReference>
<dbReference type="FunFam" id="3.40.640.10:FF:000001">
    <property type="entry name" value="Serine hydroxymethyltransferase"/>
    <property type="match status" value="1"/>
</dbReference>
<dbReference type="Gene3D" id="3.90.1150.10">
    <property type="entry name" value="Aspartate Aminotransferase, domain 1"/>
    <property type="match status" value="1"/>
</dbReference>
<dbReference type="Gene3D" id="3.40.640.10">
    <property type="entry name" value="Type I PLP-dependent aspartate aminotransferase-like (Major domain)"/>
    <property type="match status" value="1"/>
</dbReference>
<dbReference type="HAMAP" id="MF_00051">
    <property type="entry name" value="SHMT"/>
    <property type="match status" value="1"/>
</dbReference>
<dbReference type="InterPro" id="IPR015424">
    <property type="entry name" value="PyrdxlP-dep_Trfase"/>
</dbReference>
<dbReference type="InterPro" id="IPR015421">
    <property type="entry name" value="PyrdxlP-dep_Trfase_major"/>
</dbReference>
<dbReference type="InterPro" id="IPR015422">
    <property type="entry name" value="PyrdxlP-dep_Trfase_small"/>
</dbReference>
<dbReference type="InterPro" id="IPR001085">
    <property type="entry name" value="Ser_HO-MeTrfase"/>
</dbReference>
<dbReference type="InterPro" id="IPR049943">
    <property type="entry name" value="Ser_HO-MeTrfase-like"/>
</dbReference>
<dbReference type="InterPro" id="IPR019798">
    <property type="entry name" value="Ser_HO-MeTrfase_PLP_BS"/>
</dbReference>
<dbReference type="InterPro" id="IPR039429">
    <property type="entry name" value="SHMT-like_dom"/>
</dbReference>
<dbReference type="NCBIfam" id="NF000586">
    <property type="entry name" value="PRK00011.1"/>
    <property type="match status" value="1"/>
</dbReference>
<dbReference type="PANTHER" id="PTHR11680">
    <property type="entry name" value="SERINE HYDROXYMETHYLTRANSFERASE"/>
    <property type="match status" value="1"/>
</dbReference>
<dbReference type="PANTHER" id="PTHR11680:SF35">
    <property type="entry name" value="SERINE HYDROXYMETHYLTRANSFERASE 1"/>
    <property type="match status" value="1"/>
</dbReference>
<dbReference type="Pfam" id="PF00464">
    <property type="entry name" value="SHMT"/>
    <property type="match status" value="1"/>
</dbReference>
<dbReference type="PIRSF" id="PIRSF000412">
    <property type="entry name" value="SHMT"/>
    <property type="match status" value="1"/>
</dbReference>
<dbReference type="SUPFAM" id="SSF53383">
    <property type="entry name" value="PLP-dependent transferases"/>
    <property type="match status" value="1"/>
</dbReference>
<dbReference type="PROSITE" id="PS00096">
    <property type="entry name" value="SHMT"/>
    <property type="match status" value="1"/>
</dbReference>
<reference key="1">
    <citation type="journal article" date="2007" name="PLoS Biol.">
        <title>Evolution of symbiotic bacteria in the distal human intestine.</title>
        <authorList>
            <person name="Xu J."/>
            <person name="Mahowald M.A."/>
            <person name="Ley R.E."/>
            <person name="Lozupone C.A."/>
            <person name="Hamady M."/>
            <person name="Martens E.C."/>
            <person name="Henrissat B."/>
            <person name="Coutinho P.M."/>
            <person name="Minx P."/>
            <person name="Latreille P."/>
            <person name="Cordum H."/>
            <person name="Van Brunt A."/>
            <person name="Kim K."/>
            <person name="Fulton R.S."/>
            <person name="Fulton L.A."/>
            <person name="Clifton S.W."/>
            <person name="Wilson R.K."/>
            <person name="Knight R.D."/>
            <person name="Gordon J.I."/>
        </authorList>
    </citation>
    <scope>NUCLEOTIDE SEQUENCE [LARGE SCALE GENOMIC DNA]</scope>
    <source>
        <strain>ATCC 8482 / DSM 1447 / JCM 5826 / CCUG 4940 / NBRC 14291 / NCTC 11154</strain>
    </source>
</reference>
<proteinExistence type="inferred from homology"/>
<keyword id="KW-0028">Amino-acid biosynthesis</keyword>
<keyword id="KW-0963">Cytoplasm</keyword>
<keyword id="KW-0554">One-carbon metabolism</keyword>
<keyword id="KW-0663">Pyridoxal phosphate</keyword>
<keyword id="KW-0808">Transferase</keyword>
<name>GLYA_PHOV8</name>
<protein>
    <recommendedName>
        <fullName evidence="1">Serine hydroxymethyltransferase</fullName>
        <shortName evidence="1">SHMT</shortName>
        <shortName evidence="1">Serine methylase</shortName>
        <ecNumber evidence="1">2.1.2.1</ecNumber>
    </recommendedName>
</protein>
<feature type="chain" id="PRO_1000006222" description="Serine hydroxymethyltransferase">
    <location>
        <begin position="1"/>
        <end position="426"/>
    </location>
</feature>
<feature type="binding site" evidence="1">
    <location>
        <position position="113"/>
    </location>
    <ligand>
        <name>(6S)-5,6,7,8-tetrahydrofolate</name>
        <dbReference type="ChEBI" id="CHEBI:57453"/>
    </ligand>
</feature>
<feature type="binding site" evidence="1">
    <location>
        <begin position="117"/>
        <end position="119"/>
    </location>
    <ligand>
        <name>(6S)-5,6,7,8-tetrahydrofolate</name>
        <dbReference type="ChEBI" id="CHEBI:57453"/>
    </ligand>
</feature>
<feature type="binding site" evidence="1">
    <location>
        <begin position="363"/>
        <end position="365"/>
    </location>
    <ligand>
        <name>(6S)-5,6,7,8-tetrahydrofolate</name>
        <dbReference type="ChEBI" id="CHEBI:57453"/>
    </ligand>
</feature>
<feature type="site" description="Plays an important role in substrate specificity" evidence="1">
    <location>
        <position position="221"/>
    </location>
</feature>
<feature type="modified residue" description="N6-(pyridoxal phosphate)lysine" evidence="1">
    <location>
        <position position="222"/>
    </location>
</feature>
<gene>
    <name evidence="1" type="primary">glyA</name>
    <name type="ordered locus">BVU_3341</name>
</gene>
<sequence>MKRDDLIFDIIEKEHQRQLKGIELIASENFVSDQVMQAMGSCLTNKYAEGYPGKRYYGGCEVVDQSEQIAIDRLKQIFGAEWANVQPHSGAQANAAVFLAVLNPGDKFMGLNLAHGGHLSHGSLVNTSGIIYTPCEYNLNKETGRVDYDQMEEIALREKPKMIIGGGSAYSREWDYKRMREIADKVGAILMIDMAHPAGLIAAGLLDNPVKYAHIVTSTTHKTLRGPRGGVIMMGKDFPNPWGKKTPKGEIKMMSQLLDSAVFPGIQGGPLEHVIAAKAVAFGECLQPEYKEYQTQVKKNAAVLAQALIDRGFTIVSGGTDNHSMLVDLRTKYPDLTGKVAEKALVAADITVNKNMVPFDSRSAFQTSGIRLGTPAITTRGAKEDLMLEIAEMIETVLSNVDNEEVIAQVRARVNETMKKYPIFAY</sequence>
<evidence type="ECO:0000255" key="1">
    <source>
        <dbReference type="HAMAP-Rule" id="MF_00051"/>
    </source>
</evidence>
<accession>A6L5K3</accession>